<comment type="function">
    <text evidence="1">This protein is one of the two subunits of integration host factor, a specific DNA-binding protein that functions in genetic recombination as well as in transcriptional and translational control.</text>
</comment>
<comment type="subunit">
    <text evidence="1">Heterodimer of an alpha and a beta chain.</text>
</comment>
<comment type="similarity">
    <text evidence="1">Belongs to the bacterial histone-like protein family.</text>
</comment>
<accession>Q4UW51</accession>
<dbReference type="EMBL" id="CP000050">
    <property type="protein sequence ID" value="AAY48722.1"/>
    <property type="molecule type" value="Genomic_DNA"/>
</dbReference>
<dbReference type="RefSeq" id="WP_002811076.1">
    <property type="nucleotide sequence ID" value="NZ_CP155948.1"/>
</dbReference>
<dbReference type="SMR" id="Q4UW51"/>
<dbReference type="KEGG" id="xcb:XC_1656"/>
<dbReference type="HOGENOM" id="CLU_105066_1_3_6"/>
<dbReference type="Proteomes" id="UP000000420">
    <property type="component" value="Chromosome"/>
</dbReference>
<dbReference type="GO" id="GO:0005829">
    <property type="term" value="C:cytosol"/>
    <property type="evidence" value="ECO:0007669"/>
    <property type="project" value="TreeGrafter"/>
</dbReference>
<dbReference type="GO" id="GO:0003677">
    <property type="term" value="F:DNA binding"/>
    <property type="evidence" value="ECO:0007669"/>
    <property type="project" value="UniProtKB-UniRule"/>
</dbReference>
<dbReference type="GO" id="GO:0030527">
    <property type="term" value="F:structural constituent of chromatin"/>
    <property type="evidence" value="ECO:0007669"/>
    <property type="project" value="InterPro"/>
</dbReference>
<dbReference type="GO" id="GO:0006310">
    <property type="term" value="P:DNA recombination"/>
    <property type="evidence" value="ECO:0007669"/>
    <property type="project" value="UniProtKB-UniRule"/>
</dbReference>
<dbReference type="GO" id="GO:0009893">
    <property type="term" value="P:positive regulation of metabolic process"/>
    <property type="evidence" value="ECO:0007669"/>
    <property type="project" value="UniProtKB-ARBA"/>
</dbReference>
<dbReference type="GO" id="GO:0006355">
    <property type="term" value="P:regulation of DNA-templated transcription"/>
    <property type="evidence" value="ECO:0007669"/>
    <property type="project" value="UniProtKB-UniRule"/>
</dbReference>
<dbReference type="GO" id="GO:0006417">
    <property type="term" value="P:regulation of translation"/>
    <property type="evidence" value="ECO:0007669"/>
    <property type="project" value="UniProtKB-UniRule"/>
</dbReference>
<dbReference type="CDD" id="cd13835">
    <property type="entry name" value="IHF_A"/>
    <property type="match status" value="1"/>
</dbReference>
<dbReference type="FunFam" id="4.10.520.10:FF:000002">
    <property type="entry name" value="Integration host factor subunit alpha"/>
    <property type="match status" value="1"/>
</dbReference>
<dbReference type="Gene3D" id="4.10.520.10">
    <property type="entry name" value="IHF-like DNA-binding proteins"/>
    <property type="match status" value="1"/>
</dbReference>
<dbReference type="HAMAP" id="MF_00380">
    <property type="entry name" value="IHF_alpha"/>
    <property type="match status" value="1"/>
</dbReference>
<dbReference type="InterPro" id="IPR000119">
    <property type="entry name" value="Hist_DNA-bd"/>
</dbReference>
<dbReference type="InterPro" id="IPR020816">
    <property type="entry name" value="Histone-like_DNA-bd_CS"/>
</dbReference>
<dbReference type="InterPro" id="IPR010992">
    <property type="entry name" value="IHF-like_DNA-bd_dom_sf"/>
</dbReference>
<dbReference type="InterPro" id="IPR005684">
    <property type="entry name" value="IHF_alpha"/>
</dbReference>
<dbReference type="NCBIfam" id="TIGR00987">
    <property type="entry name" value="himA"/>
    <property type="match status" value="1"/>
</dbReference>
<dbReference type="NCBIfam" id="NF001401">
    <property type="entry name" value="PRK00285.1"/>
    <property type="match status" value="1"/>
</dbReference>
<dbReference type="PANTHER" id="PTHR33175">
    <property type="entry name" value="DNA-BINDING PROTEIN HU"/>
    <property type="match status" value="1"/>
</dbReference>
<dbReference type="PANTHER" id="PTHR33175:SF2">
    <property type="entry name" value="INTEGRATION HOST FACTOR SUBUNIT ALPHA"/>
    <property type="match status" value="1"/>
</dbReference>
<dbReference type="Pfam" id="PF00216">
    <property type="entry name" value="Bac_DNA_binding"/>
    <property type="match status" value="1"/>
</dbReference>
<dbReference type="PRINTS" id="PR01727">
    <property type="entry name" value="DNABINDINGHU"/>
</dbReference>
<dbReference type="SMART" id="SM00411">
    <property type="entry name" value="BHL"/>
    <property type="match status" value="1"/>
</dbReference>
<dbReference type="SUPFAM" id="SSF47729">
    <property type="entry name" value="IHF-like DNA-binding proteins"/>
    <property type="match status" value="1"/>
</dbReference>
<dbReference type="PROSITE" id="PS00045">
    <property type="entry name" value="HISTONE_LIKE"/>
    <property type="match status" value="1"/>
</dbReference>
<keyword id="KW-0233">DNA recombination</keyword>
<keyword id="KW-0238">DNA-binding</keyword>
<keyword id="KW-0804">Transcription</keyword>
<keyword id="KW-0805">Transcription regulation</keyword>
<keyword id="KW-0810">Translation regulation</keyword>
<sequence>MALTKAEMAERLFDEVGLNKREAKEFVDAFFDVLRDALEQGRQVKLSGFGNFDLRRKNQRPGRNPKTGEEIPISARTVVTFRPGQKLKERVEAYAGSGQ</sequence>
<gene>
    <name evidence="1" type="primary">ihfA</name>
    <name evidence="1" type="synonym">himA</name>
    <name type="ordered locus">XC_1656</name>
</gene>
<name>IHFA_XANC8</name>
<protein>
    <recommendedName>
        <fullName evidence="1">Integration host factor subunit alpha</fullName>
        <shortName evidence="1">IHF-alpha</shortName>
    </recommendedName>
</protein>
<feature type="chain" id="PRO_0000277788" description="Integration host factor subunit alpha">
    <location>
        <begin position="1"/>
        <end position="99"/>
    </location>
</feature>
<evidence type="ECO:0000255" key="1">
    <source>
        <dbReference type="HAMAP-Rule" id="MF_00380"/>
    </source>
</evidence>
<proteinExistence type="inferred from homology"/>
<organism>
    <name type="scientific">Xanthomonas campestris pv. campestris (strain 8004)</name>
    <dbReference type="NCBI Taxonomy" id="314565"/>
    <lineage>
        <taxon>Bacteria</taxon>
        <taxon>Pseudomonadati</taxon>
        <taxon>Pseudomonadota</taxon>
        <taxon>Gammaproteobacteria</taxon>
        <taxon>Lysobacterales</taxon>
        <taxon>Lysobacteraceae</taxon>
        <taxon>Xanthomonas</taxon>
    </lineage>
</organism>
<reference key="1">
    <citation type="journal article" date="2005" name="Genome Res.">
        <title>Comparative and functional genomic analyses of the pathogenicity of phytopathogen Xanthomonas campestris pv. campestris.</title>
        <authorList>
            <person name="Qian W."/>
            <person name="Jia Y."/>
            <person name="Ren S.-X."/>
            <person name="He Y.-Q."/>
            <person name="Feng J.-X."/>
            <person name="Lu L.-F."/>
            <person name="Sun Q."/>
            <person name="Ying G."/>
            <person name="Tang D.-J."/>
            <person name="Tang H."/>
            <person name="Wu W."/>
            <person name="Hao P."/>
            <person name="Wang L."/>
            <person name="Jiang B.-L."/>
            <person name="Zeng S."/>
            <person name="Gu W.-Y."/>
            <person name="Lu G."/>
            <person name="Rong L."/>
            <person name="Tian Y."/>
            <person name="Yao Z."/>
            <person name="Fu G."/>
            <person name="Chen B."/>
            <person name="Fang R."/>
            <person name="Qiang B."/>
            <person name="Chen Z."/>
            <person name="Zhao G.-P."/>
            <person name="Tang J.-L."/>
            <person name="He C."/>
        </authorList>
    </citation>
    <scope>NUCLEOTIDE SEQUENCE [LARGE SCALE GENOMIC DNA]</scope>
    <source>
        <strain>8004</strain>
    </source>
</reference>